<gene>
    <name type="ordered locus">CLD_3302</name>
</gene>
<accession>B1IJE7</accession>
<feature type="chain" id="PRO_1000127758" description="Putative 3-methyladenine DNA glycosylase">
    <location>
        <begin position="1"/>
        <end position="203"/>
    </location>
</feature>
<name>3MGH_CLOBK</name>
<organism>
    <name type="scientific">Clostridium botulinum (strain Okra / Type B1)</name>
    <dbReference type="NCBI Taxonomy" id="498213"/>
    <lineage>
        <taxon>Bacteria</taxon>
        <taxon>Bacillati</taxon>
        <taxon>Bacillota</taxon>
        <taxon>Clostridia</taxon>
        <taxon>Eubacteriales</taxon>
        <taxon>Clostridiaceae</taxon>
        <taxon>Clostridium</taxon>
    </lineage>
</organism>
<dbReference type="EC" id="3.2.2.-" evidence="1"/>
<dbReference type="EMBL" id="CP000939">
    <property type="protein sequence ID" value="ACA43856.1"/>
    <property type="molecule type" value="Genomic_DNA"/>
</dbReference>
<dbReference type="RefSeq" id="WP_003356430.1">
    <property type="nucleotide sequence ID" value="NC_010516.1"/>
</dbReference>
<dbReference type="SMR" id="B1IJE7"/>
<dbReference type="KEGG" id="cbb:CLD_3302"/>
<dbReference type="HOGENOM" id="CLU_060471_0_2_9"/>
<dbReference type="Proteomes" id="UP000008541">
    <property type="component" value="Chromosome"/>
</dbReference>
<dbReference type="GO" id="GO:0003905">
    <property type="term" value="F:alkylbase DNA N-glycosylase activity"/>
    <property type="evidence" value="ECO:0007669"/>
    <property type="project" value="InterPro"/>
</dbReference>
<dbReference type="GO" id="GO:0003677">
    <property type="term" value="F:DNA binding"/>
    <property type="evidence" value="ECO:0007669"/>
    <property type="project" value="InterPro"/>
</dbReference>
<dbReference type="GO" id="GO:0006284">
    <property type="term" value="P:base-excision repair"/>
    <property type="evidence" value="ECO:0007669"/>
    <property type="project" value="InterPro"/>
</dbReference>
<dbReference type="CDD" id="cd00540">
    <property type="entry name" value="AAG"/>
    <property type="match status" value="1"/>
</dbReference>
<dbReference type="FunFam" id="3.10.300.10:FF:000001">
    <property type="entry name" value="Putative 3-methyladenine DNA glycosylase"/>
    <property type="match status" value="1"/>
</dbReference>
<dbReference type="Gene3D" id="3.10.300.10">
    <property type="entry name" value="Methylpurine-DNA glycosylase (MPG)"/>
    <property type="match status" value="1"/>
</dbReference>
<dbReference type="HAMAP" id="MF_00527">
    <property type="entry name" value="3MGH"/>
    <property type="match status" value="1"/>
</dbReference>
<dbReference type="InterPro" id="IPR011034">
    <property type="entry name" value="Formyl_transferase-like_C_sf"/>
</dbReference>
<dbReference type="InterPro" id="IPR003180">
    <property type="entry name" value="MPG"/>
</dbReference>
<dbReference type="InterPro" id="IPR036995">
    <property type="entry name" value="MPG_sf"/>
</dbReference>
<dbReference type="NCBIfam" id="TIGR00567">
    <property type="entry name" value="3mg"/>
    <property type="match status" value="1"/>
</dbReference>
<dbReference type="NCBIfam" id="NF002001">
    <property type="entry name" value="PRK00802.1-1"/>
    <property type="match status" value="1"/>
</dbReference>
<dbReference type="PANTHER" id="PTHR10429">
    <property type="entry name" value="DNA-3-METHYLADENINE GLYCOSYLASE"/>
    <property type="match status" value="1"/>
</dbReference>
<dbReference type="PANTHER" id="PTHR10429:SF0">
    <property type="entry name" value="DNA-3-METHYLADENINE GLYCOSYLASE"/>
    <property type="match status" value="1"/>
</dbReference>
<dbReference type="Pfam" id="PF02245">
    <property type="entry name" value="Pur_DNA_glyco"/>
    <property type="match status" value="1"/>
</dbReference>
<dbReference type="SUPFAM" id="SSF50486">
    <property type="entry name" value="FMT C-terminal domain-like"/>
    <property type="match status" value="1"/>
</dbReference>
<proteinExistence type="inferred from homology"/>
<evidence type="ECO:0000255" key="1">
    <source>
        <dbReference type="HAMAP-Rule" id="MF_00527"/>
    </source>
</evidence>
<keyword id="KW-0227">DNA damage</keyword>
<keyword id="KW-0234">DNA repair</keyword>
<keyword id="KW-0378">Hydrolase</keyword>
<reference key="1">
    <citation type="journal article" date="2007" name="PLoS ONE">
        <title>Analysis of the neurotoxin complex genes in Clostridium botulinum A1-A4 and B1 strains: BoNT/A3, /Ba4 and /B1 clusters are located within plasmids.</title>
        <authorList>
            <person name="Smith T.J."/>
            <person name="Hill K.K."/>
            <person name="Foley B.T."/>
            <person name="Detter J.C."/>
            <person name="Munk A.C."/>
            <person name="Bruce D.C."/>
            <person name="Doggett N.A."/>
            <person name="Smith L.A."/>
            <person name="Marks J.D."/>
            <person name="Xie G."/>
            <person name="Brettin T.S."/>
        </authorList>
    </citation>
    <scope>NUCLEOTIDE SEQUENCE [LARGE SCALE GENOMIC DNA]</scope>
    <source>
        <strain>Okra / Type B1</strain>
    </source>
</reference>
<protein>
    <recommendedName>
        <fullName evidence="1">Putative 3-methyladenine DNA glycosylase</fullName>
        <ecNumber evidence="1">3.2.2.-</ecNumber>
    </recommendedName>
</protein>
<sequence>MRLTRDFYAKDARVLAKELLGKVLVREVDGIKLKGKIVETEAYIGAIDKASHAYGGRRTKRTEPLYGKPGIAYVYFIYGKYFCFNIISKTEGEAEGVLIRALEPLENINLISKLRFNKEFEELNNYQRKNITSGPSKLCMAFNINRDNNWEDLCESSSLYVEDVFYNDFEIIETVRVGIDYAEEARDFLWRYYIKDNAFVSVK</sequence>
<comment type="similarity">
    <text evidence="1">Belongs to the DNA glycosylase MPG family.</text>
</comment>